<proteinExistence type="inferred from homology"/>
<accession>Q9KJM5</accession>
<accession>Q6FZL9</accession>
<keyword id="KW-0240">DNA-directed RNA polymerase</keyword>
<keyword id="KW-0548">Nucleotidyltransferase</keyword>
<keyword id="KW-0804">Transcription</keyword>
<keyword id="KW-0808">Transferase</keyword>
<feature type="chain" id="PRO_0000047863" description="DNA-directed RNA polymerase subunit beta">
    <location>
        <begin position="1"/>
        <end position="1383"/>
    </location>
</feature>
<feature type="sequence conflict" description="In Ref. 1; AAF80850." evidence="2" ref="1">
    <original>Y</original>
    <variation>N</variation>
    <location>
        <position position="191"/>
    </location>
</feature>
<sequence length="1383" mass="154830">MAQTLAMTSQFNGRKRVRKFFGKIPEVTEMPNLIEVQKASYDQFLMIEEPKGGRPDEGLQAVFKSVFPISDFSGTAMLEFVGYEFDLPKFDVEECRQRDLTYAAPLKVILRLIVFDVDEDTGSKDIKDIKEQGVYMGDMPLMTTNGTFIVNGTERVIVSQMHRSPGVFFDHDKGKSHSSGKFLFAARVIPYRGSWLDIEFDAKDIIYARIDRRRKIPITSLLMALGMDASDILSTFYNKVTYERDGDGWRIPYSVGRFKGVKLISDLVDADSGEVVAEAGKKLTVRAAKALAEKGLKAVKITEDDLLGSYLAEDIVNYQTGEIYLEAGDEIDEKALKILFDVSADQINILDIDHMNIGAYIRNTLKVDKNESQQDALFDIYRVMRPGEPPTMDTAAAMFHSLFFDPERYDLSAVGRVKMNLRMDLDCPDTVRILRQEDILAVVKMLVELRDGRGEIDDIDNLGNRRVRSVGELMENQYRIGLLRMERAIKERMSSVEIDTVMPQDLINAKPAAAAVREFFGSSQLSQFMDQTNPLSEITHKRRLSALGPGGLTRERAGFEVRDVHPTHYGRICPIETPEGPNIGLINSLATFARVNKYGFIESPYRKIIDGKVTTEVIYLSAMEESKHYVAQANSSLDAEGRFTDEFVVCRHAGEVLMAPRDHVDLMDVSPKQLVSVAAALIPFLENDDANRALMGSNMQRQAVPLVRAEAPFVGTGMESIVARDSGAAVSAKRGGIVDQVDATRIVIRATEDLDPSKSGVDIYRLQKFQRSNQSTCINQRPLVHVGDRVEKGNIIADGPSTDLGDLALGRNVLVAFMPWNGYNYEDSILLSERIVADDVFTSIHIEEFEVAARDTKLGPEEITRDIPNVAEESLRNLDEAGIIYIGAEVQPGDILVGKITPKGESPMTPEEKLLRAIFGEKASDVRDTSMRMPPGAFGTVVEVRVFNRHGVEKDERAMAIEREEIERLAKDRDDEQSILDRNVYARLTDMLTGKIAVEGPKGFSKGKKLDNTIMGHYPRSQWWQFTVEDEKLQSEIEALRRQYDESKEALQRRFMDKVEKVQRGDEMPPGVMKMVKVFVAVKRKIQPGDKMAGRHGNKGVVSRILPIEDMPFLEDGTHADIVLNPLGVPSRMNVGQILETHLGWACAGMGKKIGDLVDLYQETGDIFPLRQRIENLMPDNDHNEPVRQYDNESLYKLALQMRKGVSIATPVFDGAHEADINMMLEDADLDSSGQVVLYDGRTGEPFDRPVTVGYIYMLKLHHLVDDKIHARSIGPYSLVTQQPLGGKAQFGGQRFGEMEVWALEAYGAAYTLQEMLTVKSDDVAGRTKVYEAIVRGDDTFEAGIPESFNVLVKEMRSLALNVELDDARELIAQRVLSDTTEQ</sequence>
<dbReference type="EC" id="2.7.7.6" evidence="1"/>
<dbReference type="EMBL" id="AF165994">
    <property type="protein sequence ID" value="AAF80850.1"/>
    <property type="molecule type" value="Genomic_DNA"/>
</dbReference>
<dbReference type="EMBL" id="BX897700">
    <property type="protein sequence ID" value="CAF26202.1"/>
    <property type="molecule type" value="Genomic_DNA"/>
</dbReference>
<dbReference type="RefSeq" id="WP_011179456.1">
    <property type="nucleotide sequence ID" value="NC_005955.1"/>
</dbReference>
<dbReference type="SMR" id="Q9KJM5"/>
<dbReference type="KEGG" id="bqu:BQ07130"/>
<dbReference type="eggNOG" id="COG0085">
    <property type="taxonomic scope" value="Bacteria"/>
</dbReference>
<dbReference type="HOGENOM" id="CLU_000524_4_3_5"/>
<dbReference type="OrthoDB" id="9803954at2"/>
<dbReference type="Proteomes" id="UP000000597">
    <property type="component" value="Chromosome"/>
</dbReference>
<dbReference type="GO" id="GO:0000428">
    <property type="term" value="C:DNA-directed RNA polymerase complex"/>
    <property type="evidence" value="ECO:0007669"/>
    <property type="project" value="UniProtKB-KW"/>
</dbReference>
<dbReference type="GO" id="GO:0003677">
    <property type="term" value="F:DNA binding"/>
    <property type="evidence" value="ECO:0007669"/>
    <property type="project" value="UniProtKB-UniRule"/>
</dbReference>
<dbReference type="GO" id="GO:0003899">
    <property type="term" value="F:DNA-directed RNA polymerase activity"/>
    <property type="evidence" value="ECO:0007669"/>
    <property type="project" value="UniProtKB-UniRule"/>
</dbReference>
<dbReference type="GO" id="GO:0032549">
    <property type="term" value="F:ribonucleoside binding"/>
    <property type="evidence" value="ECO:0007669"/>
    <property type="project" value="InterPro"/>
</dbReference>
<dbReference type="GO" id="GO:0006351">
    <property type="term" value="P:DNA-templated transcription"/>
    <property type="evidence" value="ECO:0007669"/>
    <property type="project" value="UniProtKB-UniRule"/>
</dbReference>
<dbReference type="CDD" id="cd00653">
    <property type="entry name" value="RNA_pol_B_RPB2"/>
    <property type="match status" value="1"/>
</dbReference>
<dbReference type="FunFam" id="2.40.50.100:FF:000006">
    <property type="entry name" value="DNA-directed RNA polymerase subunit beta"/>
    <property type="match status" value="1"/>
</dbReference>
<dbReference type="FunFam" id="3.90.1800.10:FF:000001">
    <property type="entry name" value="DNA-directed RNA polymerase subunit beta"/>
    <property type="match status" value="1"/>
</dbReference>
<dbReference type="Gene3D" id="2.40.50.100">
    <property type="match status" value="1"/>
</dbReference>
<dbReference type="Gene3D" id="2.40.50.150">
    <property type="match status" value="1"/>
</dbReference>
<dbReference type="Gene3D" id="3.90.1100.10">
    <property type="match status" value="2"/>
</dbReference>
<dbReference type="Gene3D" id="2.30.150.10">
    <property type="entry name" value="DNA-directed RNA polymerase, beta subunit, external 1 domain"/>
    <property type="match status" value="1"/>
</dbReference>
<dbReference type="Gene3D" id="2.40.270.10">
    <property type="entry name" value="DNA-directed RNA polymerase, subunit 2, domain 6"/>
    <property type="match status" value="1"/>
</dbReference>
<dbReference type="Gene3D" id="3.90.1800.10">
    <property type="entry name" value="RNA polymerase alpha subunit dimerisation domain"/>
    <property type="match status" value="1"/>
</dbReference>
<dbReference type="Gene3D" id="3.90.1110.10">
    <property type="entry name" value="RNA polymerase Rpb2, domain 2"/>
    <property type="match status" value="1"/>
</dbReference>
<dbReference type="HAMAP" id="MF_01321">
    <property type="entry name" value="RNApol_bact_RpoB"/>
    <property type="match status" value="1"/>
</dbReference>
<dbReference type="InterPro" id="IPR042107">
    <property type="entry name" value="DNA-dir_RNA_pol_bsu_ext_1_sf"/>
</dbReference>
<dbReference type="InterPro" id="IPR019462">
    <property type="entry name" value="DNA-dir_RNA_pol_bsu_external_1"/>
</dbReference>
<dbReference type="InterPro" id="IPR015712">
    <property type="entry name" value="DNA-dir_RNA_pol_su2"/>
</dbReference>
<dbReference type="InterPro" id="IPR007120">
    <property type="entry name" value="DNA-dir_RNAP_su2_dom"/>
</dbReference>
<dbReference type="InterPro" id="IPR037033">
    <property type="entry name" value="DNA-dir_RNAP_su2_hyb_sf"/>
</dbReference>
<dbReference type="InterPro" id="IPR010243">
    <property type="entry name" value="RNA_pol_bsu_bac"/>
</dbReference>
<dbReference type="InterPro" id="IPR007121">
    <property type="entry name" value="RNA_pol_bsu_CS"/>
</dbReference>
<dbReference type="InterPro" id="IPR007644">
    <property type="entry name" value="RNA_pol_bsu_protrusion"/>
</dbReference>
<dbReference type="InterPro" id="IPR007642">
    <property type="entry name" value="RNA_pol_Rpb2_2"/>
</dbReference>
<dbReference type="InterPro" id="IPR037034">
    <property type="entry name" value="RNA_pol_Rpb2_2_sf"/>
</dbReference>
<dbReference type="InterPro" id="IPR007645">
    <property type="entry name" value="RNA_pol_Rpb2_3"/>
</dbReference>
<dbReference type="InterPro" id="IPR007641">
    <property type="entry name" value="RNA_pol_Rpb2_7"/>
</dbReference>
<dbReference type="InterPro" id="IPR014724">
    <property type="entry name" value="RNA_pol_RPB2_OB-fold"/>
</dbReference>
<dbReference type="NCBIfam" id="NF001616">
    <property type="entry name" value="PRK00405.1"/>
    <property type="match status" value="1"/>
</dbReference>
<dbReference type="NCBIfam" id="TIGR02013">
    <property type="entry name" value="rpoB"/>
    <property type="match status" value="1"/>
</dbReference>
<dbReference type="PANTHER" id="PTHR20856">
    <property type="entry name" value="DNA-DIRECTED RNA POLYMERASE I SUBUNIT 2"/>
    <property type="match status" value="1"/>
</dbReference>
<dbReference type="Pfam" id="PF04563">
    <property type="entry name" value="RNA_pol_Rpb2_1"/>
    <property type="match status" value="1"/>
</dbReference>
<dbReference type="Pfam" id="PF04561">
    <property type="entry name" value="RNA_pol_Rpb2_2"/>
    <property type="match status" value="2"/>
</dbReference>
<dbReference type="Pfam" id="PF04565">
    <property type="entry name" value="RNA_pol_Rpb2_3"/>
    <property type="match status" value="1"/>
</dbReference>
<dbReference type="Pfam" id="PF10385">
    <property type="entry name" value="RNA_pol_Rpb2_45"/>
    <property type="match status" value="1"/>
</dbReference>
<dbReference type="Pfam" id="PF00562">
    <property type="entry name" value="RNA_pol_Rpb2_6"/>
    <property type="match status" value="1"/>
</dbReference>
<dbReference type="Pfam" id="PF04560">
    <property type="entry name" value="RNA_pol_Rpb2_7"/>
    <property type="match status" value="1"/>
</dbReference>
<dbReference type="SUPFAM" id="SSF64484">
    <property type="entry name" value="beta and beta-prime subunits of DNA dependent RNA-polymerase"/>
    <property type="match status" value="1"/>
</dbReference>
<dbReference type="PROSITE" id="PS01166">
    <property type="entry name" value="RNA_POL_BETA"/>
    <property type="match status" value="1"/>
</dbReference>
<name>RPOB_BARQU</name>
<organism>
    <name type="scientific">Bartonella quintana (strain Toulouse)</name>
    <name type="common">Rochalimaea quintana</name>
    <dbReference type="NCBI Taxonomy" id="283165"/>
    <lineage>
        <taxon>Bacteria</taxon>
        <taxon>Pseudomonadati</taxon>
        <taxon>Pseudomonadota</taxon>
        <taxon>Alphaproteobacteria</taxon>
        <taxon>Hyphomicrobiales</taxon>
        <taxon>Bartonellaceae</taxon>
        <taxon>Bartonella</taxon>
    </lineage>
</organism>
<reference key="1">
    <citation type="journal article" date="2001" name="J. Clin. Microbiol.">
        <title>Use of rpoB gene analysis for detection and identification of Bartonella species.</title>
        <authorList>
            <person name="Renesto P."/>
            <person name="Gouvernet J."/>
            <person name="Drancourt M."/>
            <person name="Roux V."/>
            <person name="Raoult D."/>
        </authorList>
    </citation>
    <scope>NUCLEOTIDE SEQUENCE [GENOMIC DNA]</scope>
    <source>
        <strain>ATCC VR-358 / Fuller / CIP 107027</strain>
    </source>
</reference>
<reference key="2">
    <citation type="journal article" date="2004" name="Proc. Natl. Acad. Sci. U.S.A.">
        <title>The louse-borne human pathogen Bartonella quintana is a genomic derivative of the zoonotic agent Bartonella henselae.</title>
        <authorList>
            <person name="Alsmark U.C.M."/>
            <person name="Frank A.C."/>
            <person name="Karlberg E.O."/>
            <person name="Legault B.-A."/>
            <person name="Ardell D.H."/>
            <person name="Canbaeck B."/>
            <person name="Eriksson A.-S."/>
            <person name="Naeslund A.K."/>
            <person name="Handley S.A."/>
            <person name="Huvet M."/>
            <person name="La Scola B."/>
            <person name="Holmberg M."/>
            <person name="Andersson S.G.E."/>
        </authorList>
    </citation>
    <scope>NUCLEOTIDE SEQUENCE [LARGE SCALE GENOMIC DNA]</scope>
    <source>
        <strain>Toulouse</strain>
    </source>
</reference>
<gene>
    <name evidence="1" type="primary">rpoB</name>
    <name type="ordered locus">BQ07130</name>
</gene>
<evidence type="ECO:0000255" key="1">
    <source>
        <dbReference type="HAMAP-Rule" id="MF_01321"/>
    </source>
</evidence>
<evidence type="ECO:0000305" key="2"/>
<protein>
    <recommendedName>
        <fullName evidence="1">DNA-directed RNA polymerase subunit beta</fullName>
        <shortName evidence="1">RNAP subunit beta</shortName>
        <ecNumber evidence="1">2.7.7.6</ecNumber>
    </recommendedName>
    <alternativeName>
        <fullName evidence="1">RNA polymerase subunit beta</fullName>
    </alternativeName>
    <alternativeName>
        <fullName evidence="1">Transcriptase subunit beta</fullName>
    </alternativeName>
</protein>
<comment type="function">
    <text evidence="1">DNA-dependent RNA polymerase catalyzes the transcription of DNA into RNA using the four ribonucleoside triphosphates as substrates.</text>
</comment>
<comment type="catalytic activity">
    <reaction evidence="1">
        <text>RNA(n) + a ribonucleoside 5'-triphosphate = RNA(n+1) + diphosphate</text>
        <dbReference type="Rhea" id="RHEA:21248"/>
        <dbReference type="Rhea" id="RHEA-COMP:14527"/>
        <dbReference type="Rhea" id="RHEA-COMP:17342"/>
        <dbReference type="ChEBI" id="CHEBI:33019"/>
        <dbReference type="ChEBI" id="CHEBI:61557"/>
        <dbReference type="ChEBI" id="CHEBI:140395"/>
        <dbReference type="EC" id="2.7.7.6"/>
    </reaction>
</comment>
<comment type="subunit">
    <text evidence="1">The RNAP catalytic core consists of 2 alpha, 1 beta, 1 beta' and 1 omega subunit. When a sigma factor is associated with the core the holoenzyme is formed, which can initiate transcription.</text>
</comment>
<comment type="similarity">
    <text evidence="1">Belongs to the RNA polymerase beta chain family.</text>
</comment>